<gene>
    <name evidence="1" type="primary">ispF</name>
    <name type="ordered locus">PTH_0290</name>
</gene>
<dbReference type="EC" id="4.6.1.12" evidence="1"/>
<dbReference type="EMBL" id="AP009389">
    <property type="protein sequence ID" value="BAF58471.1"/>
    <property type="molecule type" value="Genomic_DNA"/>
</dbReference>
<dbReference type="SMR" id="A5D5L5"/>
<dbReference type="STRING" id="370438.PTH_0290"/>
<dbReference type="KEGG" id="pth:PTH_0290"/>
<dbReference type="eggNOG" id="COG0245">
    <property type="taxonomic scope" value="Bacteria"/>
</dbReference>
<dbReference type="HOGENOM" id="CLU_084630_2_0_9"/>
<dbReference type="UniPathway" id="UPA00056">
    <property type="reaction ID" value="UER00095"/>
</dbReference>
<dbReference type="Proteomes" id="UP000006556">
    <property type="component" value="Chromosome"/>
</dbReference>
<dbReference type="GO" id="GO:0008685">
    <property type="term" value="F:2-C-methyl-D-erythritol 2,4-cyclodiphosphate synthase activity"/>
    <property type="evidence" value="ECO:0007669"/>
    <property type="project" value="UniProtKB-UniRule"/>
</dbReference>
<dbReference type="GO" id="GO:0046872">
    <property type="term" value="F:metal ion binding"/>
    <property type="evidence" value="ECO:0007669"/>
    <property type="project" value="UniProtKB-KW"/>
</dbReference>
<dbReference type="GO" id="GO:0019288">
    <property type="term" value="P:isopentenyl diphosphate biosynthetic process, methylerythritol 4-phosphate pathway"/>
    <property type="evidence" value="ECO:0007669"/>
    <property type="project" value="UniProtKB-UniRule"/>
</dbReference>
<dbReference type="GO" id="GO:0016114">
    <property type="term" value="P:terpenoid biosynthetic process"/>
    <property type="evidence" value="ECO:0007669"/>
    <property type="project" value="InterPro"/>
</dbReference>
<dbReference type="CDD" id="cd00554">
    <property type="entry name" value="MECDP_synthase"/>
    <property type="match status" value="1"/>
</dbReference>
<dbReference type="FunFam" id="3.30.1330.50:FF:000001">
    <property type="entry name" value="2-C-methyl-D-erythritol 2,4-cyclodiphosphate synthase"/>
    <property type="match status" value="1"/>
</dbReference>
<dbReference type="Gene3D" id="3.30.1330.50">
    <property type="entry name" value="2-C-methyl-D-erythritol 2,4-cyclodiphosphate synthase"/>
    <property type="match status" value="1"/>
</dbReference>
<dbReference type="HAMAP" id="MF_00107">
    <property type="entry name" value="IspF"/>
    <property type="match status" value="1"/>
</dbReference>
<dbReference type="InterPro" id="IPR003526">
    <property type="entry name" value="MECDP_synthase"/>
</dbReference>
<dbReference type="InterPro" id="IPR020555">
    <property type="entry name" value="MECDP_synthase_CS"/>
</dbReference>
<dbReference type="InterPro" id="IPR036571">
    <property type="entry name" value="MECDP_synthase_sf"/>
</dbReference>
<dbReference type="NCBIfam" id="TIGR00151">
    <property type="entry name" value="ispF"/>
    <property type="match status" value="1"/>
</dbReference>
<dbReference type="PANTHER" id="PTHR43181">
    <property type="entry name" value="2-C-METHYL-D-ERYTHRITOL 2,4-CYCLODIPHOSPHATE SYNTHASE, CHLOROPLASTIC"/>
    <property type="match status" value="1"/>
</dbReference>
<dbReference type="PANTHER" id="PTHR43181:SF1">
    <property type="entry name" value="2-C-METHYL-D-ERYTHRITOL 2,4-CYCLODIPHOSPHATE SYNTHASE, CHLOROPLASTIC"/>
    <property type="match status" value="1"/>
</dbReference>
<dbReference type="Pfam" id="PF02542">
    <property type="entry name" value="YgbB"/>
    <property type="match status" value="1"/>
</dbReference>
<dbReference type="SUPFAM" id="SSF69765">
    <property type="entry name" value="IpsF-like"/>
    <property type="match status" value="1"/>
</dbReference>
<dbReference type="PROSITE" id="PS01350">
    <property type="entry name" value="ISPF"/>
    <property type="match status" value="1"/>
</dbReference>
<keyword id="KW-0414">Isoprene biosynthesis</keyword>
<keyword id="KW-0456">Lyase</keyword>
<keyword id="KW-0479">Metal-binding</keyword>
<keyword id="KW-1185">Reference proteome</keyword>
<feature type="chain" id="PRO_1000075916" description="2-C-methyl-D-erythritol 2,4-cyclodiphosphate synthase">
    <location>
        <begin position="1"/>
        <end position="162"/>
    </location>
</feature>
<feature type="binding site" evidence="1">
    <location>
        <begin position="8"/>
        <end position="10"/>
    </location>
    <ligand>
        <name>4-CDP-2-C-methyl-D-erythritol 2-phosphate</name>
        <dbReference type="ChEBI" id="CHEBI:57919"/>
    </ligand>
</feature>
<feature type="binding site" evidence="1">
    <location>
        <position position="8"/>
    </location>
    <ligand>
        <name>a divalent metal cation</name>
        <dbReference type="ChEBI" id="CHEBI:60240"/>
    </ligand>
</feature>
<feature type="binding site" evidence="1">
    <location>
        <position position="10"/>
    </location>
    <ligand>
        <name>a divalent metal cation</name>
        <dbReference type="ChEBI" id="CHEBI:60240"/>
    </ligand>
</feature>
<feature type="binding site" evidence="1">
    <location>
        <begin position="34"/>
        <end position="35"/>
    </location>
    <ligand>
        <name>4-CDP-2-C-methyl-D-erythritol 2-phosphate</name>
        <dbReference type="ChEBI" id="CHEBI:57919"/>
    </ligand>
</feature>
<feature type="binding site" evidence="1">
    <location>
        <position position="42"/>
    </location>
    <ligand>
        <name>a divalent metal cation</name>
        <dbReference type="ChEBI" id="CHEBI:60240"/>
    </ligand>
</feature>
<feature type="binding site" evidence="1">
    <location>
        <begin position="56"/>
        <end position="58"/>
    </location>
    <ligand>
        <name>4-CDP-2-C-methyl-D-erythritol 2-phosphate</name>
        <dbReference type="ChEBI" id="CHEBI:57919"/>
    </ligand>
</feature>
<feature type="binding site" evidence="1">
    <location>
        <begin position="61"/>
        <end position="65"/>
    </location>
    <ligand>
        <name>4-CDP-2-C-methyl-D-erythritol 2-phosphate</name>
        <dbReference type="ChEBI" id="CHEBI:57919"/>
    </ligand>
</feature>
<feature type="binding site" evidence="1">
    <location>
        <begin position="132"/>
        <end position="135"/>
    </location>
    <ligand>
        <name>4-CDP-2-C-methyl-D-erythritol 2-phosphate</name>
        <dbReference type="ChEBI" id="CHEBI:57919"/>
    </ligand>
</feature>
<feature type="binding site" evidence="1">
    <location>
        <position position="139"/>
    </location>
    <ligand>
        <name>4-CDP-2-C-methyl-D-erythritol 2-phosphate</name>
        <dbReference type="ChEBI" id="CHEBI:57919"/>
    </ligand>
</feature>
<feature type="binding site" evidence="1">
    <location>
        <position position="142"/>
    </location>
    <ligand>
        <name>4-CDP-2-C-methyl-D-erythritol 2-phosphate</name>
        <dbReference type="ChEBI" id="CHEBI:57919"/>
    </ligand>
</feature>
<feature type="site" description="Transition state stabilizer" evidence="1">
    <location>
        <position position="34"/>
    </location>
</feature>
<feature type="site" description="Transition state stabilizer" evidence="1">
    <location>
        <position position="133"/>
    </location>
</feature>
<sequence length="162" mass="16744">MRVGFGYDVHKLVEGRPLVLGGVSIPFVKGLLGHSDADVLAHAVMDALLGAAGAGDIGRHFPDNDGRYKGISSMKLLARVGDILSRQGLAVVNIDSVVVAQGPKLSPFIEEMQKRMAGALQIQPSQVSVKATTTEGLGFAGKGEGIAAYAVALVHKTGQAAT</sequence>
<proteinExistence type="inferred from homology"/>
<reference key="1">
    <citation type="journal article" date="2008" name="Genome Res.">
        <title>The genome of Pelotomaculum thermopropionicum reveals niche-associated evolution in anaerobic microbiota.</title>
        <authorList>
            <person name="Kosaka T."/>
            <person name="Kato S."/>
            <person name="Shimoyama T."/>
            <person name="Ishii S."/>
            <person name="Abe T."/>
            <person name="Watanabe K."/>
        </authorList>
    </citation>
    <scope>NUCLEOTIDE SEQUENCE [LARGE SCALE GENOMIC DNA]</scope>
    <source>
        <strain>DSM 13744 / JCM 10971 / SI</strain>
    </source>
</reference>
<accession>A5D5L5</accession>
<comment type="function">
    <text evidence="1">Involved in the biosynthesis of isopentenyl diphosphate (IPP) and dimethylallyl diphosphate (DMAPP), two major building blocks of isoprenoid compounds. Catalyzes the conversion of 4-diphosphocytidyl-2-C-methyl-D-erythritol 2-phosphate (CDP-ME2P) to 2-C-methyl-D-erythritol 2,4-cyclodiphosphate (ME-CPP) with a corresponding release of cytidine 5-monophosphate (CMP).</text>
</comment>
<comment type="catalytic activity">
    <reaction evidence="1">
        <text>4-CDP-2-C-methyl-D-erythritol 2-phosphate = 2-C-methyl-D-erythritol 2,4-cyclic diphosphate + CMP</text>
        <dbReference type="Rhea" id="RHEA:23864"/>
        <dbReference type="ChEBI" id="CHEBI:57919"/>
        <dbReference type="ChEBI" id="CHEBI:58483"/>
        <dbReference type="ChEBI" id="CHEBI:60377"/>
        <dbReference type="EC" id="4.6.1.12"/>
    </reaction>
</comment>
<comment type="cofactor">
    <cofactor evidence="1">
        <name>a divalent metal cation</name>
        <dbReference type="ChEBI" id="CHEBI:60240"/>
    </cofactor>
    <text evidence="1">Binds 1 divalent metal cation per subunit.</text>
</comment>
<comment type="pathway">
    <text evidence="1">Isoprenoid biosynthesis; isopentenyl diphosphate biosynthesis via DXP pathway; isopentenyl diphosphate from 1-deoxy-D-xylulose 5-phosphate: step 4/6.</text>
</comment>
<comment type="subunit">
    <text evidence="1">Homotrimer.</text>
</comment>
<comment type="similarity">
    <text evidence="1">Belongs to the IspF family.</text>
</comment>
<organism>
    <name type="scientific">Pelotomaculum thermopropionicum (strain DSM 13744 / JCM 10971 / SI)</name>
    <dbReference type="NCBI Taxonomy" id="370438"/>
    <lineage>
        <taxon>Bacteria</taxon>
        <taxon>Bacillati</taxon>
        <taxon>Bacillota</taxon>
        <taxon>Clostridia</taxon>
        <taxon>Eubacteriales</taxon>
        <taxon>Desulfotomaculaceae</taxon>
        <taxon>Pelotomaculum</taxon>
    </lineage>
</organism>
<protein>
    <recommendedName>
        <fullName evidence="1">2-C-methyl-D-erythritol 2,4-cyclodiphosphate synthase</fullName>
        <shortName evidence="1">MECDP-synthase</shortName>
        <shortName evidence="1">MECPP-synthase</shortName>
        <shortName evidence="1">MECPS</shortName>
        <ecNumber evidence="1">4.6.1.12</ecNumber>
    </recommendedName>
</protein>
<name>ISPF_PELTS</name>
<evidence type="ECO:0000255" key="1">
    <source>
        <dbReference type="HAMAP-Rule" id="MF_00107"/>
    </source>
</evidence>